<proteinExistence type="inferred from homology"/>
<comment type="catalytic activity">
    <reaction>
        <text>2-formamido-N(1)-(5-O-phospho-beta-D-ribosyl)acetamidine + ATP = 5-amino-1-(5-phospho-beta-D-ribosyl)imidazole + ADP + phosphate + H(+)</text>
        <dbReference type="Rhea" id="RHEA:23032"/>
        <dbReference type="ChEBI" id="CHEBI:15378"/>
        <dbReference type="ChEBI" id="CHEBI:30616"/>
        <dbReference type="ChEBI" id="CHEBI:43474"/>
        <dbReference type="ChEBI" id="CHEBI:137981"/>
        <dbReference type="ChEBI" id="CHEBI:147287"/>
        <dbReference type="ChEBI" id="CHEBI:456216"/>
        <dbReference type="EC" id="6.3.3.1"/>
    </reaction>
</comment>
<comment type="pathway">
    <text>Purine metabolism; IMP biosynthesis via de novo pathway; 5-amino-1-(5-phospho-D-ribosyl)imidazole from N(2)-formyl-N(1)-(5-phospho-D-ribosyl)glycinamide: step 2/2.</text>
</comment>
<comment type="subcellular location">
    <subcellularLocation>
        <location evidence="1">Cytoplasm</location>
    </subcellularLocation>
</comment>
<comment type="similarity">
    <text evidence="2">Belongs to the AIR synthase family.</text>
</comment>
<gene>
    <name type="primary">purM</name>
    <name type="ordered locus">MW0954</name>
</gene>
<organism>
    <name type="scientific">Staphylococcus aureus (strain MW2)</name>
    <dbReference type="NCBI Taxonomy" id="196620"/>
    <lineage>
        <taxon>Bacteria</taxon>
        <taxon>Bacillati</taxon>
        <taxon>Bacillota</taxon>
        <taxon>Bacilli</taxon>
        <taxon>Bacillales</taxon>
        <taxon>Staphylococcaceae</taxon>
        <taxon>Staphylococcus</taxon>
    </lineage>
</organism>
<reference key="1">
    <citation type="journal article" date="2002" name="Lancet">
        <title>Genome and virulence determinants of high virulence community-acquired MRSA.</title>
        <authorList>
            <person name="Baba T."/>
            <person name="Takeuchi F."/>
            <person name="Kuroda M."/>
            <person name="Yuzawa H."/>
            <person name="Aoki K."/>
            <person name="Oguchi A."/>
            <person name="Nagai Y."/>
            <person name="Iwama N."/>
            <person name="Asano K."/>
            <person name="Naimi T."/>
            <person name="Kuroda H."/>
            <person name="Cui L."/>
            <person name="Yamamoto K."/>
            <person name="Hiramatsu K."/>
        </authorList>
    </citation>
    <scope>NUCLEOTIDE SEQUENCE [LARGE SCALE GENOMIC DNA]</scope>
    <source>
        <strain>MW2</strain>
    </source>
</reference>
<feature type="chain" id="PRO_0000148250" description="Phosphoribosylformylglycinamidine cyclo-ligase">
    <location>
        <begin position="1"/>
        <end position="342"/>
    </location>
</feature>
<dbReference type="EC" id="6.3.3.1"/>
<dbReference type="EMBL" id="BA000033">
    <property type="protein sequence ID" value="BAB94819.1"/>
    <property type="molecule type" value="Genomic_DNA"/>
</dbReference>
<dbReference type="RefSeq" id="WP_000030823.1">
    <property type="nucleotide sequence ID" value="NC_003923.1"/>
</dbReference>
<dbReference type="SMR" id="Q8NX90"/>
<dbReference type="KEGG" id="sam:MW0954"/>
<dbReference type="HOGENOM" id="CLU_047116_0_0_9"/>
<dbReference type="UniPathway" id="UPA00074">
    <property type="reaction ID" value="UER00129"/>
</dbReference>
<dbReference type="GO" id="GO:0005829">
    <property type="term" value="C:cytosol"/>
    <property type="evidence" value="ECO:0007669"/>
    <property type="project" value="TreeGrafter"/>
</dbReference>
<dbReference type="GO" id="GO:0005524">
    <property type="term" value="F:ATP binding"/>
    <property type="evidence" value="ECO:0007669"/>
    <property type="project" value="UniProtKB-KW"/>
</dbReference>
<dbReference type="GO" id="GO:0004637">
    <property type="term" value="F:phosphoribosylamine-glycine ligase activity"/>
    <property type="evidence" value="ECO:0007669"/>
    <property type="project" value="TreeGrafter"/>
</dbReference>
<dbReference type="GO" id="GO:0004641">
    <property type="term" value="F:phosphoribosylformylglycinamidine cyclo-ligase activity"/>
    <property type="evidence" value="ECO:0007669"/>
    <property type="project" value="UniProtKB-UniRule"/>
</dbReference>
<dbReference type="GO" id="GO:0006189">
    <property type="term" value="P:'de novo' IMP biosynthetic process"/>
    <property type="evidence" value="ECO:0007669"/>
    <property type="project" value="UniProtKB-UniRule"/>
</dbReference>
<dbReference type="GO" id="GO:0046084">
    <property type="term" value="P:adenine biosynthetic process"/>
    <property type="evidence" value="ECO:0007669"/>
    <property type="project" value="TreeGrafter"/>
</dbReference>
<dbReference type="CDD" id="cd02196">
    <property type="entry name" value="PurM"/>
    <property type="match status" value="1"/>
</dbReference>
<dbReference type="FunFam" id="3.30.1330.10:FF:000001">
    <property type="entry name" value="Phosphoribosylformylglycinamidine cyclo-ligase"/>
    <property type="match status" value="1"/>
</dbReference>
<dbReference type="FunFam" id="3.90.650.10:FF:000001">
    <property type="entry name" value="Phosphoribosylformylglycinamidine cyclo-ligase"/>
    <property type="match status" value="1"/>
</dbReference>
<dbReference type="Gene3D" id="3.90.650.10">
    <property type="entry name" value="PurM-like C-terminal domain"/>
    <property type="match status" value="1"/>
</dbReference>
<dbReference type="Gene3D" id="3.30.1330.10">
    <property type="entry name" value="PurM-like, N-terminal domain"/>
    <property type="match status" value="1"/>
</dbReference>
<dbReference type="HAMAP" id="MF_00741">
    <property type="entry name" value="AIRS"/>
    <property type="match status" value="1"/>
</dbReference>
<dbReference type="InterPro" id="IPR010918">
    <property type="entry name" value="PurM-like_C_dom"/>
</dbReference>
<dbReference type="InterPro" id="IPR036676">
    <property type="entry name" value="PurM-like_C_sf"/>
</dbReference>
<dbReference type="InterPro" id="IPR016188">
    <property type="entry name" value="PurM-like_N"/>
</dbReference>
<dbReference type="InterPro" id="IPR036921">
    <property type="entry name" value="PurM-like_N_sf"/>
</dbReference>
<dbReference type="InterPro" id="IPR004733">
    <property type="entry name" value="PurM_cligase"/>
</dbReference>
<dbReference type="NCBIfam" id="TIGR00878">
    <property type="entry name" value="purM"/>
    <property type="match status" value="1"/>
</dbReference>
<dbReference type="PANTHER" id="PTHR10520:SF12">
    <property type="entry name" value="TRIFUNCTIONAL PURINE BIOSYNTHETIC PROTEIN ADENOSINE-3"/>
    <property type="match status" value="1"/>
</dbReference>
<dbReference type="PANTHER" id="PTHR10520">
    <property type="entry name" value="TRIFUNCTIONAL PURINE BIOSYNTHETIC PROTEIN ADENOSINE-3-RELATED"/>
    <property type="match status" value="1"/>
</dbReference>
<dbReference type="Pfam" id="PF00586">
    <property type="entry name" value="AIRS"/>
    <property type="match status" value="1"/>
</dbReference>
<dbReference type="Pfam" id="PF02769">
    <property type="entry name" value="AIRS_C"/>
    <property type="match status" value="1"/>
</dbReference>
<dbReference type="SUPFAM" id="SSF56042">
    <property type="entry name" value="PurM C-terminal domain-like"/>
    <property type="match status" value="1"/>
</dbReference>
<dbReference type="SUPFAM" id="SSF55326">
    <property type="entry name" value="PurM N-terminal domain-like"/>
    <property type="match status" value="1"/>
</dbReference>
<name>PUR5_STAAW</name>
<protein>
    <recommendedName>
        <fullName>Phosphoribosylformylglycinamidine cyclo-ligase</fullName>
        <ecNumber>6.3.3.1</ecNumber>
    </recommendedName>
    <alternativeName>
        <fullName>AIR synthase</fullName>
    </alternativeName>
    <alternativeName>
        <fullName>AIRS</fullName>
    </alternativeName>
    <alternativeName>
        <fullName>Phosphoribosyl-aminoimidazole synthetase</fullName>
    </alternativeName>
</protein>
<sequence length="342" mass="37051">MSKAYEQSGVNIHAGYEAVERMSSHVKRTMRKEVIGGLGGFGATFDLSQLNMTAPVLVSGTDGVGTKLKLAIDYGKHDSIGIDAVAMCVNDILTTGAEPLYFLDYIATNKVVPEVIEQIVKGISDACVETNTALIGGETAEMGEMYHEGEYDVAGFAVGAVEKDDYVDSSEVKEGQVVIGLASSGIHSNGYSLVRKLINESGIDLASNFDNRPFIDVFLEPTKLYVKPVLALKKEVSIKAMNHITGGGFYENIPRALPAGYAARIDTTSFPTPKIFDWLQQQGNIDTNEMYNIFNMGIGYTVIVDEKDASRALKILAEQNVEAYQIGHIMKNESTAIELLGV</sequence>
<keyword id="KW-0067">ATP-binding</keyword>
<keyword id="KW-0963">Cytoplasm</keyword>
<keyword id="KW-0436">Ligase</keyword>
<keyword id="KW-0547">Nucleotide-binding</keyword>
<keyword id="KW-0658">Purine biosynthesis</keyword>
<evidence type="ECO:0000250" key="1"/>
<evidence type="ECO:0000305" key="2"/>
<accession>Q8NX90</accession>